<feature type="chain" id="PRO_0000222927" description="Capsid protein">
    <location>
        <begin position="1"/>
        <end position="188"/>
    </location>
</feature>
<organismHost>
    <name type="scientific">Solanum lycopersicum</name>
    <name type="common">Tomato</name>
    <name type="synonym">Lycopersicon esculentum</name>
    <dbReference type="NCBI Taxonomy" id="4081"/>
</organismHost>
<organismHost>
    <name type="scientific">Solanum melongena</name>
    <name type="common">eggplant</name>
    <dbReference type="NCBI Taxonomy" id="4111"/>
</organismHost>
<organismHost>
    <name type="scientific">Solanum seaforthianum</name>
    <name type="common">Brazilian nightshade</name>
    <dbReference type="NCBI Taxonomy" id="45840"/>
</organismHost>
<reference key="1">
    <citation type="journal article" date="1989" name="Virology">
        <title>Nucleotide sequence of the genome of eggplant mosaic tymovirus.</title>
        <authorList>
            <person name="Osorio-Keese M.E."/>
            <person name="Keese P."/>
            <person name="Gibbs A."/>
        </authorList>
    </citation>
    <scope>NUCLEOTIDE SEQUENCE [GENOMIC RNA]</scope>
</reference>
<protein>
    <recommendedName>
        <fullName>Capsid protein</fullName>
    </recommendedName>
    <alternativeName>
        <fullName>Coat protein</fullName>
    </alternativeName>
    <alternativeName>
        <fullName>Virion protein</fullName>
    </alternativeName>
</protein>
<proteinExistence type="inferred from homology"/>
<evidence type="ECO:0000250" key="1">
    <source>
        <dbReference type="UniProtKB" id="P20125"/>
    </source>
</evidence>
<evidence type="ECO:0000305" key="2"/>
<keyword id="KW-0167">Capsid protein</keyword>
<keyword id="KW-1142">T=3 icosahedral capsid protein</keyword>
<keyword id="KW-0946">Virion</keyword>
<comment type="function">
    <text evidence="1">Self-assembles to form a T=3 icosahedral capsid composed of 180 copies of the capsid protein. The capsid encapsulates the single-stranded RNA genome.</text>
</comment>
<comment type="subcellular location">
    <subcellularLocation>
        <location evidence="1">Virion</location>
    </subcellularLocation>
</comment>
<comment type="similarity">
    <text evidence="2">Belongs to the tymoviruses capsid protein family.</text>
</comment>
<accession>P20123</accession>
<sequence>MEDTAIIRSPQPSINAPGFHLPPTDSQQSSAIELPFQFQATTFGATETAAQISLASANAITKLASLYRHVRLTQCAATITPTAAAIANPLTVNIVWVSDNSTAKPTEILNVFGGSSYTFGGALNATKPLTIPLPMNSVNCMLKDSVLYTDCPKLLAYSAAPSSPSKTPTATIQIHGKLRLSSPLLQAN</sequence>
<dbReference type="EMBL" id="J04374">
    <property type="protein sequence ID" value="AAA43040.1"/>
    <property type="molecule type" value="Genomic_RNA"/>
</dbReference>
<dbReference type="PIR" id="JQ0104">
    <property type="entry name" value="VCWPEM"/>
</dbReference>
<dbReference type="RefSeq" id="NP_040969.1">
    <property type="nucleotide sequence ID" value="NC_001480.1"/>
</dbReference>
<dbReference type="SMR" id="P20123"/>
<dbReference type="GeneID" id="1493959"/>
<dbReference type="KEGG" id="vg:1493959"/>
<dbReference type="OrthoDB" id="15633at10239"/>
<dbReference type="Proteomes" id="UP000008664">
    <property type="component" value="Genome"/>
</dbReference>
<dbReference type="GO" id="GO:0039617">
    <property type="term" value="C:T=3 icosahedral viral capsid"/>
    <property type="evidence" value="ECO:0007669"/>
    <property type="project" value="UniProtKB-KW"/>
</dbReference>
<dbReference type="GO" id="GO:0005198">
    <property type="term" value="F:structural molecule activity"/>
    <property type="evidence" value="ECO:0007669"/>
    <property type="project" value="InterPro"/>
</dbReference>
<dbReference type="Gene3D" id="2.60.120.20">
    <property type="match status" value="1"/>
</dbReference>
<dbReference type="InterPro" id="IPR000574">
    <property type="entry name" value="Tymo_coat"/>
</dbReference>
<dbReference type="InterPro" id="IPR029053">
    <property type="entry name" value="Viral_coat"/>
</dbReference>
<dbReference type="Pfam" id="PF00983">
    <property type="entry name" value="Tymo_coat"/>
    <property type="match status" value="1"/>
</dbReference>
<dbReference type="SUPFAM" id="SSF88633">
    <property type="entry name" value="Positive stranded ssRNA viruses"/>
    <property type="match status" value="1"/>
</dbReference>
<organism>
    <name type="scientific">Eggplant mosaic virus</name>
    <dbReference type="NCBI Taxonomy" id="12151"/>
    <lineage>
        <taxon>Viruses</taxon>
        <taxon>Riboviria</taxon>
        <taxon>Orthornavirae</taxon>
        <taxon>Kitrinoviricota</taxon>
        <taxon>Alsuviricetes</taxon>
        <taxon>Tymovirales</taxon>
        <taxon>Tymoviridae</taxon>
        <taxon>Tymovirus</taxon>
        <taxon>Tymovirus melongenae</taxon>
    </lineage>
</organism>
<name>CAPSD_EPMV</name>